<keyword id="KW-0072">Autophagy</keyword>
<keyword id="KW-0963">Cytoplasm</keyword>
<keyword id="KW-0378">Hydrolase</keyword>
<keyword id="KW-0443">Lipid metabolism</keyword>
<keyword id="KW-0645">Protease</keyword>
<keyword id="KW-0653">Protein transport</keyword>
<keyword id="KW-1185">Reference proteome</keyword>
<keyword id="KW-0788">Thiol protease</keyword>
<keyword id="KW-0813">Transport</keyword>
<keyword id="KW-0833">Ubl conjugation pathway</keyword>
<sequence length="380" mass="43383">MESEFPDTDEPVWILGRQHHLNEDKSKLLLDVSARLWFTYRRKFSPIGGTGPSSDAGWGCMLRCGQMMLAQALICRHLGRDWQWEKHKKQPEEYHRILHCFLDRKDCCYSIHQMAQMGVGEGKSIGEWFGPNTVAQVLKKLALFDEWNSLAVYVSMDNTVVIEDIKKMCRSPPQSSSTAHSSAHLHRSALGRNRNAAGLCTGWKPLLLIIPLRLGINHINPVYIDAFKECFKMPQSLGALGGKPNNAYYFIGFLGNELIYLDPHTTQSFVDSEENGTVDDQSFHCQQAPHRMKIMNLDPSVALGFFCKEECDFDNWCSLVQKEILKQQSLRMFELVQKHPPHWPPFIPPTKPEVTTTGAELIESTDKLFELEEEFEILSV</sequence>
<name>ATG4A_CHICK</name>
<proteinExistence type="evidence at transcript level"/>
<evidence type="ECO:0000250" key="1">
    <source>
        <dbReference type="UniProtKB" id="Q8BGE6"/>
    </source>
</evidence>
<evidence type="ECO:0000250" key="2">
    <source>
        <dbReference type="UniProtKB" id="Q8WYN0"/>
    </source>
</evidence>
<evidence type="ECO:0000250" key="3">
    <source>
        <dbReference type="UniProtKB" id="Q9Y4P1"/>
    </source>
</evidence>
<evidence type="ECO:0000303" key="4">
    <source>
    </source>
</evidence>
<evidence type="ECO:0000305" key="5"/>
<gene>
    <name evidence="2" type="primary">ATG4A</name>
    <name evidence="2" type="synonym">APG4A</name>
    <name evidence="4" type="ORF">RCJMB04_23b20</name>
</gene>
<protein>
    <recommendedName>
        <fullName evidence="5">Cysteine protease ATG4A</fullName>
        <ecNumber evidence="2">3.4.22.-</ecNumber>
    </recommendedName>
    <alternativeName>
        <fullName evidence="2">Autophagy-related protein 4 homolog A</fullName>
    </alternativeName>
</protein>
<reference key="1">
    <citation type="journal article" date="2005" name="Genome Biol.">
        <title>Full-length cDNAs from chicken bursal lymphocytes to facilitate gene function analysis.</title>
        <authorList>
            <person name="Caldwell R.B."/>
            <person name="Kierzek A.M."/>
            <person name="Arakawa H."/>
            <person name="Bezzubov Y."/>
            <person name="Zaim J."/>
            <person name="Fiedler P."/>
            <person name="Kutter S."/>
            <person name="Blagodatski A."/>
            <person name="Kostovska D."/>
            <person name="Koter M."/>
            <person name="Plachy J."/>
            <person name="Carninci P."/>
            <person name="Hayashizaki Y."/>
            <person name="Buerstedde J.-M."/>
        </authorList>
    </citation>
    <scope>NUCLEOTIDE SEQUENCE [LARGE SCALE MRNA]</scope>
    <source>
        <strain>CB</strain>
        <tissue>Bursa of Fabricius</tissue>
    </source>
</reference>
<organism>
    <name type="scientific">Gallus gallus</name>
    <name type="common">Chicken</name>
    <dbReference type="NCBI Taxonomy" id="9031"/>
    <lineage>
        <taxon>Eukaryota</taxon>
        <taxon>Metazoa</taxon>
        <taxon>Chordata</taxon>
        <taxon>Craniata</taxon>
        <taxon>Vertebrata</taxon>
        <taxon>Euteleostomi</taxon>
        <taxon>Archelosauria</taxon>
        <taxon>Archosauria</taxon>
        <taxon>Dinosauria</taxon>
        <taxon>Saurischia</taxon>
        <taxon>Theropoda</taxon>
        <taxon>Coelurosauria</taxon>
        <taxon>Aves</taxon>
        <taxon>Neognathae</taxon>
        <taxon>Galloanserae</taxon>
        <taxon>Galliformes</taxon>
        <taxon>Phasianidae</taxon>
        <taxon>Phasianinae</taxon>
        <taxon>Gallus</taxon>
    </lineage>
</organism>
<dbReference type="EC" id="3.4.22.-" evidence="2"/>
<dbReference type="EMBL" id="AJ720667">
    <property type="protein sequence ID" value="CAG32326.1"/>
    <property type="molecule type" value="mRNA"/>
</dbReference>
<dbReference type="RefSeq" id="NP_001258915.1">
    <property type="nucleotide sequence ID" value="NM_001271986.1"/>
</dbReference>
<dbReference type="RefSeq" id="NP_001258916.1">
    <property type="nucleotide sequence ID" value="NM_001271987.2"/>
</dbReference>
<dbReference type="SMR" id="Q5ZIW7"/>
<dbReference type="FunCoup" id="Q5ZIW7">
    <property type="interactions" value="1764"/>
</dbReference>
<dbReference type="STRING" id="9031.ENSGALP00000013462"/>
<dbReference type="MEROPS" id="C54.002"/>
<dbReference type="PaxDb" id="9031-ENSGALP00000013462"/>
<dbReference type="GeneID" id="772074"/>
<dbReference type="KEGG" id="gga:772074"/>
<dbReference type="CTD" id="115201"/>
<dbReference type="VEuPathDB" id="HostDB:geneid_772074"/>
<dbReference type="eggNOG" id="KOG2674">
    <property type="taxonomic scope" value="Eukaryota"/>
</dbReference>
<dbReference type="HOGENOM" id="CLU_021259_0_1_1"/>
<dbReference type="InParanoid" id="Q5ZIW7"/>
<dbReference type="OrthoDB" id="2960936at2759"/>
<dbReference type="PhylomeDB" id="Q5ZIW7"/>
<dbReference type="PRO" id="PR:Q5ZIW7"/>
<dbReference type="Proteomes" id="UP000000539">
    <property type="component" value="Unassembled WGS sequence"/>
</dbReference>
<dbReference type="GO" id="GO:0005737">
    <property type="term" value="C:cytoplasm"/>
    <property type="evidence" value="ECO:0000318"/>
    <property type="project" value="GO_Central"/>
</dbReference>
<dbReference type="GO" id="GO:0004197">
    <property type="term" value="F:cysteine-type endopeptidase activity"/>
    <property type="evidence" value="ECO:0000318"/>
    <property type="project" value="GO_Central"/>
</dbReference>
<dbReference type="GO" id="GO:0008234">
    <property type="term" value="F:cysteine-type peptidase activity"/>
    <property type="evidence" value="ECO:0000250"/>
    <property type="project" value="UniProtKB"/>
</dbReference>
<dbReference type="GO" id="GO:0019786">
    <property type="term" value="F:protein-phosphatidylethanolamide deconjugating activity"/>
    <property type="evidence" value="ECO:0000250"/>
    <property type="project" value="UniProtKB"/>
</dbReference>
<dbReference type="GO" id="GO:0035973">
    <property type="term" value="P:aggrephagy"/>
    <property type="evidence" value="ECO:0000318"/>
    <property type="project" value="GO_Central"/>
</dbReference>
<dbReference type="GO" id="GO:0000045">
    <property type="term" value="P:autophagosome assembly"/>
    <property type="evidence" value="ECO:0000318"/>
    <property type="project" value="GO_Central"/>
</dbReference>
<dbReference type="GO" id="GO:0006914">
    <property type="term" value="P:autophagy"/>
    <property type="evidence" value="ECO:0000250"/>
    <property type="project" value="UniProtKB"/>
</dbReference>
<dbReference type="GO" id="GO:0006629">
    <property type="term" value="P:lipid metabolic process"/>
    <property type="evidence" value="ECO:0007669"/>
    <property type="project" value="UniProtKB-KW"/>
</dbReference>
<dbReference type="GO" id="GO:0000423">
    <property type="term" value="P:mitophagy"/>
    <property type="evidence" value="ECO:0000318"/>
    <property type="project" value="GO_Central"/>
</dbReference>
<dbReference type="GO" id="GO:0034727">
    <property type="term" value="P:piecemeal microautophagy of the nucleus"/>
    <property type="evidence" value="ECO:0000318"/>
    <property type="project" value="GO_Central"/>
</dbReference>
<dbReference type="GO" id="GO:0051697">
    <property type="term" value="P:protein delipidation"/>
    <property type="evidence" value="ECO:0000250"/>
    <property type="project" value="UniProtKB"/>
</dbReference>
<dbReference type="GO" id="GO:0016485">
    <property type="term" value="P:protein processing"/>
    <property type="evidence" value="ECO:0000318"/>
    <property type="project" value="GO_Central"/>
</dbReference>
<dbReference type="GO" id="GO:0015031">
    <property type="term" value="P:protein transport"/>
    <property type="evidence" value="ECO:0007669"/>
    <property type="project" value="UniProtKB-KW"/>
</dbReference>
<dbReference type="InterPro" id="IPR038765">
    <property type="entry name" value="Papain-like_cys_pep_sf"/>
</dbReference>
<dbReference type="InterPro" id="IPR005078">
    <property type="entry name" value="Peptidase_C54"/>
</dbReference>
<dbReference type="InterPro" id="IPR046792">
    <property type="entry name" value="Peptidase_C54_cat"/>
</dbReference>
<dbReference type="PANTHER" id="PTHR22624">
    <property type="entry name" value="CYSTEINE PROTEASE ATG4"/>
    <property type="match status" value="1"/>
</dbReference>
<dbReference type="PANTHER" id="PTHR22624:SF35">
    <property type="entry name" value="CYSTEINE PROTEASE ATG4A"/>
    <property type="match status" value="1"/>
</dbReference>
<dbReference type="Pfam" id="PF03416">
    <property type="entry name" value="Peptidase_C54"/>
    <property type="match status" value="1"/>
</dbReference>
<dbReference type="SUPFAM" id="SSF54001">
    <property type="entry name" value="Cysteine proteinases"/>
    <property type="match status" value="1"/>
</dbReference>
<comment type="function">
    <text evidence="2">Cysteine protease that plays a key role in autophagy by mediating both proteolytic activation and delipidation of ATG8 family proteins. The protease activity is required for proteolytic activation of ATG8 family proteins: cleaves the C-terminal amino acid of ATG8 proteins to reveal a C-terminal glycine. Exposure of the glycine at the C-terminus is essential for ATG8 proteins conjugation to phosphatidylethanolamine (PE) and insertion to membranes, which is necessary for autophagy. Protease activity is also required to counteract formation of high-molecular weight conjugates of ATG8 proteins (ATG8ylation): acts as a deubiquitinating-like enzyme that removes ATG8 conjugated to other proteins, such as ATG3. In addition to the protease activity, also mediates delipidation of ATG8 family proteins. Catalyzes delipidation of PE-conjugated forms of ATG8 proteins during macroautophagy.</text>
</comment>
<comment type="catalytic activity">
    <reaction evidence="2">
        <text>[protein]-C-terminal L-amino acid-glycyl-phosphatidylethanolamide + H2O = [protein]-C-terminal L-amino acid-glycine + a 1,2-diacyl-sn-glycero-3-phosphoethanolamine</text>
        <dbReference type="Rhea" id="RHEA:67548"/>
        <dbReference type="Rhea" id="RHEA-COMP:17323"/>
        <dbReference type="Rhea" id="RHEA-COMP:17324"/>
        <dbReference type="ChEBI" id="CHEBI:15377"/>
        <dbReference type="ChEBI" id="CHEBI:64612"/>
        <dbReference type="ChEBI" id="CHEBI:172940"/>
        <dbReference type="ChEBI" id="CHEBI:172941"/>
    </reaction>
    <physiologicalReaction direction="left-to-right" evidence="2">
        <dbReference type="Rhea" id="RHEA:67549"/>
    </physiologicalReaction>
</comment>
<comment type="subcellular location">
    <subcellularLocation>
        <location evidence="1">Cytoplasm</location>
    </subcellularLocation>
</comment>
<comment type="domain">
    <text evidence="2">The LIR motif (LC3-interacting region) is required for the interaction with the ATG8 family proteins. Required for proteolytic activation and delipidation of ATG8 proteins.</text>
</comment>
<comment type="similarity">
    <text evidence="5">Belongs to the peptidase C54 family.</text>
</comment>
<accession>Q5ZIW7</accession>
<feature type="chain" id="PRO_0000215841" description="Cysteine protease ATG4A">
    <location>
        <begin position="1"/>
        <end position="380"/>
    </location>
</feature>
<feature type="short sequence motif" description="LIR" evidence="2">
    <location>
        <begin position="375"/>
        <end position="378"/>
    </location>
</feature>
<feature type="active site" description="Nucleophile" evidence="3">
    <location>
        <position position="60"/>
    </location>
</feature>
<feature type="active site" evidence="3">
    <location>
        <position position="262"/>
    </location>
</feature>
<feature type="active site" evidence="3">
    <location>
        <position position="264"/>
    </location>
</feature>